<accession>P45809</accession>
<keyword id="KW-0488">Methylation</keyword>
<keyword id="KW-0687">Ribonucleoprotein</keyword>
<keyword id="KW-0689">Ribosomal protein</keyword>
<keyword id="KW-0694">RNA-binding</keyword>
<keyword id="KW-0699">rRNA-binding</keyword>
<keyword id="KW-0820">tRNA-binding</keyword>
<protein>
    <recommendedName>
        <fullName evidence="2">Small ribosomal subunit protein uS12</fullName>
    </recommendedName>
    <alternativeName>
        <fullName evidence="3">30S ribosomal protein S12</fullName>
    </alternativeName>
</protein>
<name>RS12_ERWAM</name>
<sequence length="124" mass="13697">MATVNQLVRKPRVRKVAKSNVPALEACPQKRGVCTRVYTTTPKKPNSALRKVCRVRLTNGFEVTSYIGGEGHNLQEHSVILIRGGRVKDLPGVRYHTVRGALDCSGVKDRKQARSKYGVKNAKA</sequence>
<comment type="function">
    <text evidence="2">With S4 and S5 plays an important role in translational accuracy.</text>
</comment>
<comment type="function">
    <text evidence="2">Interacts with and stabilizes bases of the 16S rRNA that are involved in tRNA selection in the A site and with the mRNA backbone. Located at the interface of the 30S and 50S subunits, it traverses the body of the 30S subunit contacting proteins on the other side and probably holding the rRNA structure together. The combined cluster of proteins S8, S12 and S17 appears to hold together the shoulder and platform of the 30S subunit.</text>
</comment>
<comment type="subunit">
    <text evidence="2">Part of the 30S ribosomal subunit. Contacts proteins S8 and S17. May interact with IF1 in the 30S initiation complex.</text>
</comment>
<comment type="similarity">
    <text evidence="2">Belongs to the universal ribosomal protein uS12 family.</text>
</comment>
<dbReference type="EMBL" id="L36465">
    <property type="protein sequence ID" value="AAA24867.1"/>
    <property type="molecule type" value="Genomic_DNA"/>
</dbReference>
<dbReference type="SMR" id="P45809"/>
<dbReference type="GO" id="GO:0015935">
    <property type="term" value="C:small ribosomal subunit"/>
    <property type="evidence" value="ECO:0007669"/>
    <property type="project" value="InterPro"/>
</dbReference>
<dbReference type="GO" id="GO:0019843">
    <property type="term" value="F:rRNA binding"/>
    <property type="evidence" value="ECO:0007669"/>
    <property type="project" value="UniProtKB-UniRule"/>
</dbReference>
<dbReference type="GO" id="GO:0003735">
    <property type="term" value="F:structural constituent of ribosome"/>
    <property type="evidence" value="ECO:0007669"/>
    <property type="project" value="InterPro"/>
</dbReference>
<dbReference type="GO" id="GO:0000049">
    <property type="term" value="F:tRNA binding"/>
    <property type="evidence" value="ECO:0007669"/>
    <property type="project" value="UniProtKB-UniRule"/>
</dbReference>
<dbReference type="GO" id="GO:0006412">
    <property type="term" value="P:translation"/>
    <property type="evidence" value="ECO:0007669"/>
    <property type="project" value="UniProtKB-UniRule"/>
</dbReference>
<dbReference type="CDD" id="cd03368">
    <property type="entry name" value="Ribosomal_S12"/>
    <property type="match status" value="1"/>
</dbReference>
<dbReference type="FunFam" id="2.40.50.140:FF:000001">
    <property type="entry name" value="30S ribosomal protein S12"/>
    <property type="match status" value="1"/>
</dbReference>
<dbReference type="Gene3D" id="2.40.50.140">
    <property type="entry name" value="Nucleic acid-binding proteins"/>
    <property type="match status" value="1"/>
</dbReference>
<dbReference type="HAMAP" id="MF_00403_B">
    <property type="entry name" value="Ribosomal_uS12_B"/>
    <property type="match status" value="1"/>
</dbReference>
<dbReference type="InterPro" id="IPR012340">
    <property type="entry name" value="NA-bd_OB-fold"/>
</dbReference>
<dbReference type="InterPro" id="IPR006032">
    <property type="entry name" value="Ribosomal_uS12"/>
</dbReference>
<dbReference type="InterPro" id="IPR005679">
    <property type="entry name" value="Ribosomal_uS12_bac"/>
</dbReference>
<dbReference type="NCBIfam" id="TIGR00981">
    <property type="entry name" value="rpsL_bact"/>
    <property type="match status" value="1"/>
</dbReference>
<dbReference type="PANTHER" id="PTHR11652">
    <property type="entry name" value="30S RIBOSOMAL PROTEIN S12 FAMILY MEMBER"/>
    <property type="match status" value="1"/>
</dbReference>
<dbReference type="Pfam" id="PF00164">
    <property type="entry name" value="Ribosom_S12_S23"/>
    <property type="match status" value="1"/>
</dbReference>
<dbReference type="PIRSF" id="PIRSF002133">
    <property type="entry name" value="Ribosomal_S12/S23"/>
    <property type="match status" value="1"/>
</dbReference>
<dbReference type="PRINTS" id="PR01034">
    <property type="entry name" value="RIBOSOMALS12"/>
</dbReference>
<dbReference type="SUPFAM" id="SSF50249">
    <property type="entry name" value="Nucleic acid-binding proteins"/>
    <property type="match status" value="1"/>
</dbReference>
<dbReference type="PROSITE" id="PS00055">
    <property type="entry name" value="RIBOSOMAL_S12"/>
    <property type="match status" value="1"/>
</dbReference>
<reference key="1">
    <citation type="submission" date="1994-10" db="EMBL/GenBank/DDBJ databases">
        <authorList>
            <person name="Chiou C.S."/>
            <person name="Jones A.L."/>
        </authorList>
    </citation>
    <scope>NUCLEOTIDE SEQUENCE [GENOMIC DNA]</scope>
    <source>
        <strain>EL01</strain>
    </source>
</reference>
<organism>
    <name type="scientific">Erwinia amylovora</name>
    <name type="common">Fire blight bacteria</name>
    <dbReference type="NCBI Taxonomy" id="552"/>
    <lineage>
        <taxon>Bacteria</taxon>
        <taxon>Pseudomonadati</taxon>
        <taxon>Pseudomonadota</taxon>
        <taxon>Gammaproteobacteria</taxon>
        <taxon>Enterobacterales</taxon>
        <taxon>Erwiniaceae</taxon>
        <taxon>Erwinia</taxon>
    </lineage>
</organism>
<proteinExistence type="inferred from homology"/>
<feature type="chain" id="PRO_0000146224" description="Small ribosomal subunit protein uS12">
    <location>
        <begin position="1"/>
        <end position="124"/>
    </location>
</feature>
<feature type="modified residue" description="3-methylthioaspartic acid" evidence="1">
    <location>
        <position position="89"/>
    </location>
</feature>
<evidence type="ECO:0000250" key="1"/>
<evidence type="ECO:0000255" key="2">
    <source>
        <dbReference type="HAMAP-Rule" id="MF_00403"/>
    </source>
</evidence>
<evidence type="ECO:0000305" key="3"/>
<gene>
    <name evidence="2" type="primary">rpsL</name>
</gene>